<protein>
    <recommendedName>
        <fullName evidence="1">S-adenosylmethionine synthase</fullName>
        <shortName evidence="1">AdoMet synthase</shortName>
        <ecNumber evidence="1">2.5.1.6</ecNumber>
    </recommendedName>
    <alternativeName>
        <fullName evidence="1">MAT</fullName>
    </alternativeName>
    <alternativeName>
        <fullName evidence="1">Methionine adenosyltransferase</fullName>
    </alternativeName>
</protein>
<proteinExistence type="inferred from homology"/>
<gene>
    <name evidence="1" type="primary">metK</name>
    <name type="ordered locus">RB5444</name>
</gene>
<comment type="function">
    <text evidence="1">Catalyzes the formation of S-adenosylmethionine (AdoMet) from methionine and ATP. The overall synthetic reaction is composed of two sequential steps, AdoMet formation and the subsequent tripolyphosphate hydrolysis which occurs prior to release of AdoMet from the enzyme.</text>
</comment>
<comment type="catalytic activity">
    <reaction evidence="1">
        <text>L-methionine + ATP + H2O = S-adenosyl-L-methionine + phosphate + diphosphate</text>
        <dbReference type="Rhea" id="RHEA:21080"/>
        <dbReference type="ChEBI" id="CHEBI:15377"/>
        <dbReference type="ChEBI" id="CHEBI:30616"/>
        <dbReference type="ChEBI" id="CHEBI:33019"/>
        <dbReference type="ChEBI" id="CHEBI:43474"/>
        <dbReference type="ChEBI" id="CHEBI:57844"/>
        <dbReference type="ChEBI" id="CHEBI:59789"/>
        <dbReference type="EC" id="2.5.1.6"/>
    </reaction>
</comment>
<comment type="cofactor">
    <cofactor evidence="1">
        <name>Mg(2+)</name>
        <dbReference type="ChEBI" id="CHEBI:18420"/>
    </cofactor>
    <text evidence="1">Binds 2 divalent ions per subunit.</text>
</comment>
<comment type="cofactor">
    <cofactor evidence="1">
        <name>K(+)</name>
        <dbReference type="ChEBI" id="CHEBI:29103"/>
    </cofactor>
    <text evidence="1">Binds 1 potassium ion per subunit.</text>
</comment>
<comment type="pathway">
    <text evidence="1">Amino-acid biosynthesis; S-adenosyl-L-methionine biosynthesis; S-adenosyl-L-methionine from L-methionine: step 1/1.</text>
</comment>
<comment type="subunit">
    <text evidence="1">Homotetramer; dimer of dimers.</text>
</comment>
<comment type="subcellular location">
    <subcellularLocation>
        <location evidence="1">Cytoplasm</location>
    </subcellularLocation>
</comment>
<comment type="similarity">
    <text evidence="1">Belongs to the AdoMet synthase family.</text>
</comment>
<sequence length="395" mass="42407">MSNESGRFLFTSESVSMGHPDKLADRISDSILDALLAQDPHSRVACETLVTTGLAVIAGEISSKADVDYEKIVRDTIVAVGYDDPDIGIDGKTCEVQIRLDAQSPDIAQGVNSDEASGKDIGAGDQGLMFGYACKDTPELMPLPIALSHRIINRITEARFNKEVDWLRPDNKSQVTVEYDGNRPVRIEAVVVSAQHGPDVSHDEIEKFVIENVVKPSIPAELDKGDIKYHINPTGKFIIGGPHGDCGLTGRKIIVDTYGGWGRHGGGAFSGKDSTKVDRSAAYMARYVAKNIVAAGLAERCEVQLAYAIGVTEPVSVHVDTEGTGKIEDAKLCELIREHFPLTPGGIIDHLQLRRPVFVETTAGGHFGRDGEGFTWEKTDKADALAEAAGATATA</sequence>
<keyword id="KW-0067">ATP-binding</keyword>
<keyword id="KW-0963">Cytoplasm</keyword>
<keyword id="KW-0460">Magnesium</keyword>
<keyword id="KW-0479">Metal-binding</keyword>
<keyword id="KW-0547">Nucleotide-binding</keyword>
<keyword id="KW-0554">One-carbon metabolism</keyword>
<keyword id="KW-0630">Potassium</keyword>
<keyword id="KW-1185">Reference proteome</keyword>
<keyword id="KW-0808">Transferase</keyword>
<accession>Q7URU7</accession>
<reference key="1">
    <citation type="journal article" date="2003" name="Proc. Natl. Acad. Sci. U.S.A.">
        <title>Complete genome sequence of the marine planctomycete Pirellula sp. strain 1.</title>
        <authorList>
            <person name="Gloeckner F.O."/>
            <person name="Kube M."/>
            <person name="Bauer M."/>
            <person name="Teeling H."/>
            <person name="Lombardot T."/>
            <person name="Ludwig W."/>
            <person name="Gade D."/>
            <person name="Beck A."/>
            <person name="Borzym K."/>
            <person name="Heitmann K."/>
            <person name="Rabus R."/>
            <person name="Schlesner H."/>
            <person name="Amann R."/>
            <person name="Reinhardt R."/>
        </authorList>
    </citation>
    <scope>NUCLEOTIDE SEQUENCE [LARGE SCALE GENOMIC DNA]</scope>
    <source>
        <strain>DSM 10527 / NCIMB 13988 / SH1</strain>
    </source>
</reference>
<name>METK_RHOBA</name>
<organism>
    <name type="scientific">Rhodopirellula baltica (strain DSM 10527 / NCIMB 13988 / SH1)</name>
    <dbReference type="NCBI Taxonomy" id="243090"/>
    <lineage>
        <taxon>Bacteria</taxon>
        <taxon>Pseudomonadati</taxon>
        <taxon>Planctomycetota</taxon>
        <taxon>Planctomycetia</taxon>
        <taxon>Pirellulales</taxon>
        <taxon>Pirellulaceae</taxon>
        <taxon>Rhodopirellula</taxon>
    </lineage>
</organism>
<evidence type="ECO:0000255" key="1">
    <source>
        <dbReference type="HAMAP-Rule" id="MF_00086"/>
    </source>
</evidence>
<dbReference type="EC" id="2.5.1.6" evidence="1"/>
<dbReference type="EMBL" id="BX294142">
    <property type="protein sequence ID" value="CAD74240.1"/>
    <property type="molecule type" value="Genomic_DNA"/>
</dbReference>
<dbReference type="RefSeq" id="NP_866701.1">
    <property type="nucleotide sequence ID" value="NC_005027.1"/>
</dbReference>
<dbReference type="RefSeq" id="WP_007331112.1">
    <property type="nucleotide sequence ID" value="NC_005027.1"/>
</dbReference>
<dbReference type="SMR" id="Q7URU7"/>
<dbReference type="FunCoup" id="Q7URU7">
    <property type="interactions" value="527"/>
</dbReference>
<dbReference type="STRING" id="243090.RB5444"/>
<dbReference type="EnsemblBacteria" id="CAD74240">
    <property type="protein sequence ID" value="CAD74240"/>
    <property type="gene ID" value="RB5444"/>
</dbReference>
<dbReference type="KEGG" id="rba:RB5444"/>
<dbReference type="PATRIC" id="fig|243090.15.peg.2614"/>
<dbReference type="eggNOG" id="COG0192">
    <property type="taxonomic scope" value="Bacteria"/>
</dbReference>
<dbReference type="HOGENOM" id="CLU_041802_1_1_0"/>
<dbReference type="InParanoid" id="Q7URU7"/>
<dbReference type="OrthoDB" id="9801686at2"/>
<dbReference type="UniPathway" id="UPA00315">
    <property type="reaction ID" value="UER00080"/>
</dbReference>
<dbReference type="Proteomes" id="UP000001025">
    <property type="component" value="Chromosome"/>
</dbReference>
<dbReference type="GO" id="GO:0005829">
    <property type="term" value="C:cytosol"/>
    <property type="evidence" value="ECO:0000318"/>
    <property type="project" value="GO_Central"/>
</dbReference>
<dbReference type="GO" id="GO:0005524">
    <property type="term" value="F:ATP binding"/>
    <property type="evidence" value="ECO:0007669"/>
    <property type="project" value="UniProtKB-UniRule"/>
</dbReference>
<dbReference type="GO" id="GO:0000287">
    <property type="term" value="F:magnesium ion binding"/>
    <property type="evidence" value="ECO:0007669"/>
    <property type="project" value="UniProtKB-UniRule"/>
</dbReference>
<dbReference type="GO" id="GO:0004478">
    <property type="term" value="F:methionine adenosyltransferase activity"/>
    <property type="evidence" value="ECO:0000318"/>
    <property type="project" value="GO_Central"/>
</dbReference>
<dbReference type="GO" id="GO:0006730">
    <property type="term" value="P:one-carbon metabolic process"/>
    <property type="evidence" value="ECO:0007669"/>
    <property type="project" value="UniProtKB-KW"/>
</dbReference>
<dbReference type="GO" id="GO:0006556">
    <property type="term" value="P:S-adenosylmethionine biosynthetic process"/>
    <property type="evidence" value="ECO:0000318"/>
    <property type="project" value="GO_Central"/>
</dbReference>
<dbReference type="CDD" id="cd18079">
    <property type="entry name" value="S-AdoMet_synt"/>
    <property type="match status" value="1"/>
</dbReference>
<dbReference type="FunFam" id="3.30.300.10:FF:000003">
    <property type="entry name" value="S-adenosylmethionine synthase"/>
    <property type="match status" value="1"/>
</dbReference>
<dbReference type="Gene3D" id="3.30.300.10">
    <property type="match status" value="3"/>
</dbReference>
<dbReference type="HAMAP" id="MF_00086">
    <property type="entry name" value="S_AdoMet_synth1"/>
    <property type="match status" value="1"/>
</dbReference>
<dbReference type="InterPro" id="IPR022631">
    <property type="entry name" value="ADOMET_SYNTHASE_CS"/>
</dbReference>
<dbReference type="InterPro" id="IPR022630">
    <property type="entry name" value="S-AdoMet_synt_C"/>
</dbReference>
<dbReference type="InterPro" id="IPR022629">
    <property type="entry name" value="S-AdoMet_synt_central"/>
</dbReference>
<dbReference type="InterPro" id="IPR022628">
    <property type="entry name" value="S-AdoMet_synt_N"/>
</dbReference>
<dbReference type="InterPro" id="IPR002133">
    <property type="entry name" value="S-AdoMet_synthetase"/>
</dbReference>
<dbReference type="InterPro" id="IPR022636">
    <property type="entry name" value="S-AdoMet_synthetase_sfam"/>
</dbReference>
<dbReference type="NCBIfam" id="TIGR01034">
    <property type="entry name" value="metK"/>
    <property type="match status" value="1"/>
</dbReference>
<dbReference type="PANTHER" id="PTHR11964">
    <property type="entry name" value="S-ADENOSYLMETHIONINE SYNTHETASE"/>
    <property type="match status" value="1"/>
</dbReference>
<dbReference type="Pfam" id="PF02773">
    <property type="entry name" value="S-AdoMet_synt_C"/>
    <property type="match status" value="1"/>
</dbReference>
<dbReference type="Pfam" id="PF02772">
    <property type="entry name" value="S-AdoMet_synt_M"/>
    <property type="match status" value="1"/>
</dbReference>
<dbReference type="Pfam" id="PF00438">
    <property type="entry name" value="S-AdoMet_synt_N"/>
    <property type="match status" value="1"/>
</dbReference>
<dbReference type="PIRSF" id="PIRSF000497">
    <property type="entry name" value="MAT"/>
    <property type="match status" value="1"/>
</dbReference>
<dbReference type="SUPFAM" id="SSF55973">
    <property type="entry name" value="S-adenosylmethionine synthetase"/>
    <property type="match status" value="3"/>
</dbReference>
<dbReference type="PROSITE" id="PS00376">
    <property type="entry name" value="ADOMET_SYNTHASE_1"/>
    <property type="match status" value="1"/>
</dbReference>
<dbReference type="PROSITE" id="PS00377">
    <property type="entry name" value="ADOMET_SYNTHASE_2"/>
    <property type="match status" value="1"/>
</dbReference>
<feature type="chain" id="PRO_0000174577" description="S-adenosylmethionine synthase">
    <location>
        <begin position="1"/>
        <end position="395"/>
    </location>
</feature>
<feature type="region of interest" description="Flexible loop" evidence="1">
    <location>
        <begin position="103"/>
        <end position="113"/>
    </location>
</feature>
<feature type="binding site" description="in other chain" evidence="1">
    <location>
        <position position="19"/>
    </location>
    <ligand>
        <name>ATP</name>
        <dbReference type="ChEBI" id="CHEBI:30616"/>
        <note>ligand shared between two neighboring subunits</note>
    </ligand>
</feature>
<feature type="binding site" evidence="1">
    <location>
        <position position="21"/>
    </location>
    <ligand>
        <name>Mg(2+)</name>
        <dbReference type="ChEBI" id="CHEBI:18420"/>
    </ligand>
</feature>
<feature type="binding site" evidence="1">
    <location>
        <position position="47"/>
    </location>
    <ligand>
        <name>K(+)</name>
        <dbReference type="ChEBI" id="CHEBI:29103"/>
    </ligand>
</feature>
<feature type="binding site" description="in other chain" evidence="1">
    <location>
        <position position="60"/>
    </location>
    <ligand>
        <name>L-methionine</name>
        <dbReference type="ChEBI" id="CHEBI:57844"/>
        <note>ligand shared between two neighboring subunits</note>
    </ligand>
</feature>
<feature type="binding site" description="in other chain" evidence="1">
    <location>
        <position position="103"/>
    </location>
    <ligand>
        <name>L-methionine</name>
        <dbReference type="ChEBI" id="CHEBI:57844"/>
        <note>ligand shared between two neighboring subunits</note>
    </ligand>
</feature>
<feature type="binding site" description="in other chain" evidence="1">
    <location>
        <begin position="170"/>
        <end position="172"/>
    </location>
    <ligand>
        <name>ATP</name>
        <dbReference type="ChEBI" id="CHEBI:30616"/>
        <note>ligand shared between two neighboring subunits</note>
    </ligand>
</feature>
<feature type="binding site" description="in other chain" evidence="1">
    <location>
        <begin position="236"/>
        <end position="237"/>
    </location>
    <ligand>
        <name>ATP</name>
        <dbReference type="ChEBI" id="CHEBI:30616"/>
        <note>ligand shared between two neighboring subunits</note>
    </ligand>
</feature>
<feature type="binding site" evidence="1">
    <location>
        <position position="245"/>
    </location>
    <ligand>
        <name>ATP</name>
        <dbReference type="ChEBI" id="CHEBI:30616"/>
        <note>ligand shared between two neighboring subunits</note>
    </ligand>
</feature>
<feature type="binding site" evidence="1">
    <location>
        <position position="245"/>
    </location>
    <ligand>
        <name>L-methionine</name>
        <dbReference type="ChEBI" id="CHEBI:57844"/>
        <note>ligand shared between two neighboring subunits</note>
    </ligand>
</feature>
<feature type="binding site" description="in other chain" evidence="1">
    <location>
        <begin position="251"/>
        <end position="252"/>
    </location>
    <ligand>
        <name>ATP</name>
        <dbReference type="ChEBI" id="CHEBI:30616"/>
        <note>ligand shared between two neighboring subunits</note>
    </ligand>
</feature>
<feature type="binding site" evidence="1">
    <location>
        <position position="268"/>
    </location>
    <ligand>
        <name>ATP</name>
        <dbReference type="ChEBI" id="CHEBI:30616"/>
        <note>ligand shared between two neighboring subunits</note>
    </ligand>
</feature>
<feature type="binding site" evidence="1">
    <location>
        <position position="272"/>
    </location>
    <ligand>
        <name>ATP</name>
        <dbReference type="ChEBI" id="CHEBI:30616"/>
        <note>ligand shared between two neighboring subunits</note>
    </ligand>
</feature>
<feature type="binding site" description="in other chain" evidence="1">
    <location>
        <position position="276"/>
    </location>
    <ligand>
        <name>L-methionine</name>
        <dbReference type="ChEBI" id="CHEBI:57844"/>
        <note>ligand shared between two neighboring subunits</note>
    </ligand>
</feature>